<proteinExistence type="inferred from homology"/>
<protein>
    <recommendedName>
        <fullName evidence="1">Guanylate kinase</fullName>
        <ecNumber evidence="1">2.7.4.8</ecNumber>
    </recommendedName>
    <alternativeName>
        <fullName evidence="1">GMP kinase</fullName>
    </alternativeName>
</protein>
<sequence length="221" mass="24747">MPSSQAHSAVDTPIENHFPGSLFMVVAPSGAGKSTLVNALLAQDPSIRLSVSATTRKPRPGEQHGREYNFMTVDEFKACRDRGEFLEWAEVHGNYYATSRVWIEEQMRAGTDVLLEIDWQGAQQVHRRFANAVEIFILPPSLTALEDRLKKRGQDEPNVIVRRLLAAGSEMAHAPEADYVIINEVFEAALAELRTVVQAARLRYMAQKARHAELFVELGIH</sequence>
<keyword id="KW-0067">ATP-binding</keyword>
<keyword id="KW-0963">Cytoplasm</keyword>
<keyword id="KW-0418">Kinase</keyword>
<keyword id="KW-0547">Nucleotide-binding</keyword>
<keyword id="KW-1185">Reference proteome</keyword>
<keyword id="KW-0808">Transferase</keyword>
<comment type="function">
    <text evidence="1">Essential for recycling GMP and indirectly, cGMP.</text>
</comment>
<comment type="catalytic activity">
    <reaction evidence="1">
        <text>GMP + ATP = GDP + ADP</text>
        <dbReference type="Rhea" id="RHEA:20780"/>
        <dbReference type="ChEBI" id="CHEBI:30616"/>
        <dbReference type="ChEBI" id="CHEBI:58115"/>
        <dbReference type="ChEBI" id="CHEBI:58189"/>
        <dbReference type="ChEBI" id="CHEBI:456216"/>
        <dbReference type="EC" id="2.7.4.8"/>
    </reaction>
</comment>
<comment type="subcellular location">
    <subcellularLocation>
        <location evidence="1">Cytoplasm</location>
    </subcellularLocation>
</comment>
<comment type="similarity">
    <text evidence="1">Belongs to the guanylate kinase family.</text>
</comment>
<gene>
    <name evidence="1" type="primary">gmk</name>
    <name type="ordered locus">RSc2155</name>
    <name type="ORF">RS01447</name>
</gene>
<accession>Q8XXF9</accession>
<feature type="chain" id="PRO_0000170590" description="Guanylate kinase">
    <location>
        <begin position="1"/>
        <end position="221"/>
    </location>
</feature>
<feature type="domain" description="Guanylate kinase-like" evidence="1">
    <location>
        <begin position="20"/>
        <end position="198"/>
    </location>
</feature>
<feature type="binding site" evidence="1">
    <location>
        <begin position="27"/>
        <end position="34"/>
    </location>
    <ligand>
        <name>ATP</name>
        <dbReference type="ChEBI" id="CHEBI:30616"/>
    </ligand>
</feature>
<organism>
    <name type="scientific">Ralstonia nicotianae (strain ATCC BAA-1114 / GMI1000)</name>
    <name type="common">Ralstonia solanacearum</name>
    <dbReference type="NCBI Taxonomy" id="267608"/>
    <lineage>
        <taxon>Bacteria</taxon>
        <taxon>Pseudomonadati</taxon>
        <taxon>Pseudomonadota</taxon>
        <taxon>Betaproteobacteria</taxon>
        <taxon>Burkholderiales</taxon>
        <taxon>Burkholderiaceae</taxon>
        <taxon>Ralstonia</taxon>
        <taxon>Ralstonia solanacearum species complex</taxon>
    </lineage>
</organism>
<name>KGUA_RALN1</name>
<dbReference type="EC" id="2.7.4.8" evidence="1"/>
<dbReference type="EMBL" id="AL646052">
    <property type="protein sequence ID" value="CAD15862.1"/>
    <property type="molecule type" value="Genomic_DNA"/>
</dbReference>
<dbReference type="RefSeq" id="WP_011002084.1">
    <property type="nucleotide sequence ID" value="NC_003295.1"/>
</dbReference>
<dbReference type="SMR" id="Q8XXF9"/>
<dbReference type="STRING" id="267608.RSc2155"/>
<dbReference type="EnsemblBacteria" id="CAD15862">
    <property type="protein sequence ID" value="CAD15862"/>
    <property type="gene ID" value="RSc2155"/>
</dbReference>
<dbReference type="GeneID" id="93853178"/>
<dbReference type="KEGG" id="rso:RSc2155"/>
<dbReference type="eggNOG" id="COG0194">
    <property type="taxonomic scope" value="Bacteria"/>
</dbReference>
<dbReference type="HOGENOM" id="CLU_001715_1_0_4"/>
<dbReference type="Proteomes" id="UP000001436">
    <property type="component" value="Chromosome"/>
</dbReference>
<dbReference type="GO" id="GO:0005829">
    <property type="term" value="C:cytosol"/>
    <property type="evidence" value="ECO:0007669"/>
    <property type="project" value="TreeGrafter"/>
</dbReference>
<dbReference type="GO" id="GO:0005524">
    <property type="term" value="F:ATP binding"/>
    <property type="evidence" value="ECO:0007669"/>
    <property type="project" value="UniProtKB-UniRule"/>
</dbReference>
<dbReference type="GO" id="GO:0004385">
    <property type="term" value="F:guanylate kinase activity"/>
    <property type="evidence" value="ECO:0007669"/>
    <property type="project" value="UniProtKB-UniRule"/>
</dbReference>
<dbReference type="CDD" id="cd00071">
    <property type="entry name" value="GMPK"/>
    <property type="match status" value="1"/>
</dbReference>
<dbReference type="FunFam" id="3.30.63.10:FF:000002">
    <property type="entry name" value="Guanylate kinase 1"/>
    <property type="match status" value="1"/>
</dbReference>
<dbReference type="Gene3D" id="3.30.63.10">
    <property type="entry name" value="Guanylate Kinase phosphate binding domain"/>
    <property type="match status" value="1"/>
</dbReference>
<dbReference type="Gene3D" id="3.40.50.300">
    <property type="entry name" value="P-loop containing nucleotide triphosphate hydrolases"/>
    <property type="match status" value="1"/>
</dbReference>
<dbReference type="HAMAP" id="MF_00328">
    <property type="entry name" value="Guanylate_kinase"/>
    <property type="match status" value="1"/>
</dbReference>
<dbReference type="InterPro" id="IPR008145">
    <property type="entry name" value="GK/Ca_channel_bsu"/>
</dbReference>
<dbReference type="InterPro" id="IPR008144">
    <property type="entry name" value="Guanylate_kin-like_dom"/>
</dbReference>
<dbReference type="InterPro" id="IPR017665">
    <property type="entry name" value="Guanylate_kinase"/>
</dbReference>
<dbReference type="InterPro" id="IPR020590">
    <property type="entry name" value="Guanylate_kinase_CS"/>
</dbReference>
<dbReference type="InterPro" id="IPR027417">
    <property type="entry name" value="P-loop_NTPase"/>
</dbReference>
<dbReference type="NCBIfam" id="TIGR03263">
    <property type="entry name" value="guanyl_kin"/>
    <property type="match status" value="1"/>
</dbReference>
<dbReference type="PANTHER" id="PTHR23117:SF13">
    <property type="entry name" value="GUANYLATE KINASE"/>
    <property type="match status" value="1"/>
</dbReference>
<dbReference type="PANTHER" id="PTHR23117">
    <property type="entry name" value="GUANYLATE KINASE-RELATED"/>
    <property type="match status" value="1"/>
</dbReference>
<dbReference type="Pfam" id="PF00625">
    <property type="entry name" value="Guanylate_kin"/>
    <property type="match status" value="1"/>
</dbReference>
<dbReference type="SMART" id="SM00072">
    <property type="entry name" value="GuKc"/>
    <property type="match status" value="1"/>
</dbReference>
<dbReference type="SUPFAM" id="SSF52540">
    <property type="entry name" value="P-loop containing nucleoside triphosphate hydrolases"/>
    <property type="match status" value="1"/>
</dbReference>
<dbReference type="PROSITE" id="PS00856">
    <property type="entry name" value="GUANYLATE_KINASE_1"/>
    <property type="match status" value="1"/>
</dbReference>
<dbReference type="PROSITE" id="PS50052">
    <property type="entry name" value="GUANYLATE_KINASE_2"/>
    <property type="match status" value="1"/>
</dbReference>
<reference key="1">
    <citation type="journal article" date="2002" name="Nature">
        <title>Genome sequence of the plant pathogen Ralstonia solanacearum.</title>
        <authorList>
            <person name="Salanoubat M."/>
            <person name="Genin S."/>
            <person name="Artiguenave F."/>
            <person name="Gouzy J."/>
            <person name="Mangenot S."/>
            <person name="Arlat M."/>
            <person name="Billault A."/>
            <person name="Brottier P."/>
            <person name="Camus J.-C."/>
            <person name="Cattolico L."/>
            <person name="Chandler M."/>
            <person name="Choisne N."/>
            <person name="Claudel-Renard C."/>
            <person name="Cunnac S."/>
            <person name="Demange N."/>
            <person name="Gaspin C."/>
            <person name="Lavie M."/>
            <person name="Moisan A."/>
            <person name="Robert C."/>
            <person name="Saurin W."/>
            <person name="Schiex T."/>
            <person name="Siguier P."/>
            <person name="Thebault P."/>
            <person name="Whalen M."/>
            <person name="Wincker P."/>
            <person name="Levy M."/>
            <person name="Weissenbach J."/>
            <person name="Boucher C.A."/>
        </authorList>
    </citation>
    <scope>NUCLEOTIDE SEQUENCE [LARGE SCALE GENOMIC DNA]</scope>
    <source>
        <strain>ATCC BAA-1114 / GMI1000</strain>
    </source>
</reference>
<evidence type="ECO:0000255" key="1">
    <source>
        <dbReference type="HAMAP-Rule" id="MF_00328"/>
    </source>
</evidence>